<dbReference type="EMBL" id="JR987773">
    <property type="status" value="NOT_ANNOTATED_CDS"/>
    <property type="molecule type" value="mRNA"/>
</dbReference>
<dbReference type="SMR" id="B3EWY9"/>
<dbReference type="OrthoDB" id="5985948at2759"/>
<dbReference type="GO" id="GO:0016020">
    <property type="term" value="C:membrane"/>
    <property type="evidence" value="ECO:0007669"/>
    <property type="project" value="UniProtKB-SubCell"/>
</dbReference>
<dbReference type="GO" id="GO:0005509">
    <property type="term" value="F:calcium ion binding"/>
    <property type="evidence" value="ECO:0007669"/>
    <property type="project" value="InterPro"/>
</dbReference>
<dbReference type="GO" id="GO:0007160">
    <property type="term" value="P:cell-matrix adhesion"/>
    <property type="evidence" value="ECO:0007669"/>
    <property type="project" value="InterPro"/>
</dbReference>
<dbReference type="CDD" id="cd00054">
    <property type="entry name" value="EGF_CA"/>
    <property type="match status" value="4"/>
</dbReference>
<dbReference type="FunFam" id="2.10.25.10:FF:000010">
    <property type="entry name" value="Pro-epidermal growth factor"/>
    <property type="match status" value="1"/>
</dbReference>
<dbReference type="FunFam" id="2.20.100.10:FF:000001">
    <property type="entry name" value="semaphorin-5A isoform X1"/>
    <property type="match status" value="1"/>
</dbReference>
<dbReference type="FunFam" id="2.20.100.10:FF:000007">
    <property type="entry name" value="Thrombospondin 1"/>
    <property type="match status" value="1"/>
</dbReference>
<dbReference type="FunFam" id="2.10.25.10:FF:000027">
    <property type="entry name" value="Thrombospondin 3"/>
    <property type="match status" value="1"/>
</dbReference>
<dbReference type="FunFam" id="2.20.100.10:FF:000002">
    <property type="entry name" value="Unc-5 netrin receptor C"/>
    <property type="match status" value="1"/>
</dbReference>
<dbReference type="FunFam" id="2.10.25.10:FF:000119">
    <property type="entry name" value="vitamin K-dependent protein S"/>
    <property type="match status" value="1"/>
</dbReference>
<dbReference type="Gene3D" id="2.60.40.10">
    <property type="entry name" value="Immunoglobulins"/>
    <property type="match status" value="1"/>
</dbReference>
<dbReference type="Gene3D" id="2.10.25.10">
    <property type="entry name" value="Laminin"/>
    <property type="match status" value="7"/>
</dbReference>
<dbReference type="Gene3D" id="2.20.100.10">
    <property type="entry name" value="Thrombospondin type-1 (TSP1) repeat"/>
    <property type="match status" value="3"/>
</dbReference>
<dbReference type="InterPro" id="IPR005533">
    <property type="entry name" value="AMOP_dom"/>
</dbReference>
<dbReference type="InterPro" id="IPR056619">
    <property type="entry name" value="C8-3_MUC4"/>
</dbReference>
<dbReference type="InterPro" id="IPR026823">
    <property type="entry name" value="cEGF"/>
</dbReference>
<dbReference type="InterPro" id="IPR001881">
    <property type="entry name" value="EGF-like_Ca-bd_dom"/>
</dbReference>
<dbReference type="InterPro" id="IPR000742">
    <property type="entry name" value="EGF-like_dom"/>
</dbReference>
<dbReference type="InterPro" id="IPR000152">
    <property type="entry name" value="EGF-type_Asp/Asn_hydroxyl_site"/>
</dbReference>
<dbReference type="InterPro" id="IPR018097">
    <property type="entry name" value="EGF_Ca-bd_CS"/>
</dbReference>
<dbReference type="InterPro" id="IPR051495">
    <property type="entry name" value="Epithelial_Barrier/Signaling"/>
</dbReference>
<dbReference type="InterPro" id="IPR009030">
    <property type="entry name" value="Growth_fac_rcpt_cys_sf"/>
</dbReference>
<dbReference type="InterPro" id="IPR013783">
    <property type="entry name" value="Ig-like_fold"/>
</dbReference>
<dbReference type="InterPro" id="IPR003886">
    <property type="entry name" value="NIDO_dom"/>
</dbReference>
<dbReference type="InterPro" id="IPR000884">
    <property type="entry name" value="TSP1_rpt"/>
</dbReference>
<dbReference type="InterPro" id="IPR036383">
    <property type="entry name" value="TSP1_rpt_sf"/>
</dbReference>
<dbReference type="InterPro" id="IPR001846">
    <property type="entry name" value="VWF_type-D"/>
</dbReference>
<dbReference type="PANTHER" id="PTHR13802">
    <property type="entry name" value="MUCIN 4-RELATED"/>
    <property type="match status" value="1"/>
</dbReference>
<dbReference type="PANTHER" id="PTHR13802:SF52">
    <property type="entry name" value="MUCIN-4"/>
    <property type="match status" value="1"/>
</dbReference>
<dbReference type="Pfam" id="PF23263">
    <property type="entry name" value="C8-3_MUC4"/>
    <property type="match status" value="1"/>
</dbReference>
<dbReference type="Pfam" id="PF12662">
    <property type="entry name" value="cEGF"/>
    <property type="match status" value="3"/>
</dbReference>
<dbReference type="Pfam" id="PF06119">
    <property type="entry name" value="NIDO"/>
    <property type="match status" value="1"/>
</dbReference>
<dbReference type="Pfam" id="PF00090">
    <property type="entry name" value="TSP_1"/>
    <property type="match status" value="3"/>
</dbReference>
<dbReference type="Pfam" id="PF00094">
    <property type="entry name" value="VWD"/>
    <property type="match status" value="1"/>
</dbReference>
<dbReference type="SMART" id="SM00181">
    <property type="entry name" value="EGF"/>
    <property type="match status" value="7"/>
</dbReference>
<dbReference type="SMART" id="SM00179">
    <property type="entry name" value="EGF_CA"/>
    <property type="match status" value="6"/>
</dbReference>
<dbReference type="SMART" id="SM00539">
    <property type="entry name" value="NIDO"/>
    <property type="match status" value="1"/>
</dbReference>
<dbReference type="SMART" id="SM00209">
    <property type="entry name" value="TSP1"/>
    <property type="match status" value="3"/>
</dbReference>
<dbReference type="SMART" id="SM00216">
    <property type="entry name" value="VWD"/>
    <property type="match status" value="1"/>
</dbReference>
<dbReference type="SUPFAM" id="SSF57184">
    <property type="entry name" value="Growth factor receptor domain"/>
    <property type="match status" value="2"/>
</dbReference>
<dbReference type="SUPFAM" id="SSF82895">
    <property type="entry name" value="TSP-1 type 1 repeat"/>
    <property type="match status" value="3"/>
</dbReference>
<dbReference type="PROSITE" id="PS50856">
    <property type="entry name" value="AMOP"/>
    <property type="match status" value="1"/>
</dbReference>
<dbReference type="PROSITE" id="PS00010">
    <property type="entry name" value="ASX_HYDROXYL"/>
    <property type="match status" value="3"/>
</dbReference>
<dbReference type="PROSITE" id="PS00022">
    <property type="entry name" value="EGF_1"/>
    <property type="match status" value="1"/>
</dbReference>
<dbReference type="PROSITE" id="PS01186">
    <property type="entry name" value="EGF_2"/>
    <property type="match status" value="4"/>
</dbReference>
<dbReference type="PROSITE" id="PS50026">
    <property type="entry name" value="EGF_3"/>
    <property type="match status" value="5"/>
</dbReference>
<dbReference type="PROSITE" id="PS01187">
    <property type="entry name" value="EGF_CA"/>
    <property type="match status" value="3"/>
</dbReference>
<dbReference type="PROSITE" id="PS51220">
    <property type="entry name" value="NIDO"/>
    <property type="match status" value="1"/>
</dbReference>
<dbReference type="PROSITE" id="PS50092">
    <property type="entry name" value="TSP1"/>
    <property type="match status" value="3"/>
</dbReference>
<dbReference type="PROSITE" id="PS51233">
    <property type="entry name" value="VWFD"/>
    <property type="match status" value="1"/>
</dbReference>
<proteinExistence type="evidence at protein level"/>
<sequence length="1594" mass="176622">DTTAGPDTTSAPQPTTPTGLCGFIRRQPLPEDNLNALNFTLSNFTVERWCAREPEFKQFLAQSVSDRCFGNGSCGVESGIPEVFIFPGFPVVNSPLLVRFYVRLQVNSSVSVVLERTVLTSILDRVLENLTAEFGVQFSVDGGFTEWSPFGPCSTSCGPGIQVRFRNCTNPPPINNGSDCVGPRNETRPCNNGSCPIDGNFTQWEIWSGCSVTCGKGVQRRFRSCTKPPPSNGGQDCIGDRLETRECLKPPCPVDGNFTEWGAWSKCSQTCENGTQVRFRSCTNPPPAFGGRDCMGPTNETRACNDGPCPGRLYPHGLLANDNLLPNRDAFSNFCGRINLFNQEIPFFIRRHRRVYICRNGMLKFRRSAIIRYPQRFPGPRNEDFLFRFRNSYIIAPYWLTISDDAFEQPINTSKVFYRIYSKFSRRDRDVLDRANHDVRRFQTSVPQFEAQWVLVVTWLQLYPPTFPGVRLSNSFQVVLITDGQHTFSLFNYPENGIQWSTPTGRLFPNLYPPGSGLPVAGYNAGDRNLPFFNLPNSGTVNIQNIDQMMGNTNLTGVWFFRLEMNSILSLAGKKCNEWSRQRTSRISPTLPPCPCLFGQATLDKRYFVDYNQTVSKRGNGTICAYSLPSGSRRWVQQCCYTDLPSGGKVLSSSPPESGGPYLIALPGSPVISDADGHEFCCSSSQCSLYYRLRPPRSCFGYTLRRRGLIFGDPHFTTLDNTTYTFNGLGEYTIVAIDDEAFEMQARTARTSGRGLGTAFSAAVAKERGTATVEARINQKAGDLEVLIAGKPFNISTITTTGTNIPDGNITLVRDSNGSITALFPSNIAFTFTDVEGTLAIAFEAPDDFKNRTKGLLGTWNDDPSDDFVTPDGTLVPADAAPRRIHYEFGLKWQINASQSLFTYSDLESPSTFVDLSYIPMFIDNITWVNDSFRYEAVKACGNNTQCLFDAAVTEDTSYGINTKKLEDNNNEINKELANFPPKILGPKVINATIGQAIEVKITAEHNSSDFFVFTVNNLPDVIILANTSRYLLIRWTPTSLQKVEPVFIVTDSHNSSSELRPLILLCPCANGSRCIDDEEVSNQRNKGFSFLLLSCTCPAGLTGQYCQHKIDACVENNQPCFPGVKCTDVSSSSNGTRYQCDPCPKGYSGNGSICEDIDECSDANVSKCDHSCINLPGSYVCDCNQGFSLEGDGTSCKDINECLISNDCMQNCTNLPGGRTCSCLDGFQIDPKDQTACVPISRCDTFKVGCQQVCVMDRGQPKCACHKGYSLNADGRTCDDINECTTHRHKCSQICHNLDGSYTCSCQPGFNLSPDQTTCEDIDECGLINEAHCEGSLEICINTMGSFRCECQDGFHRVNDTCQESLPSTNGPTGTTGIVASSVSIALTIKDADLHEWQARLSRMFMDAVAKVVVDYCKGNANGNCYGNAVIAKRYTRSISGTSLVARVHILNDFPETRDANLLVAFYVMLSTNQGEVYVMNKDSLLRALQESQTELSWAIKKEISEIRALKVDDESPTPYETREDGLEMIWLLVGVSVAVAVPLMIVIVILYREYRRIAKQRRKTNNFDLRQWSGARERTIYSGFTNSKSARL</sequence>
<keyword id="KW-0106">Calcium</keyword>
<keyword id="KW-0903">Direct protein sequencing</keyword>
<keyword id="KW-1015">Disulfide bond</keyword>
<keyword id="KW-0245">EGF-like domain</keyword>
<keyword id="KW-0472">Membrane</keyword>
<keyword id="KW-0677">Repeat</keyword>
<keyword id="KW-0812">Transmembrane</keyword>
<keyword id="KW-1133">Transmembrane helix</keyword>
<organism>
    <name type="scientific">Acropora millepora</name>
    <name type="common">Staghorn coral</name>
    <name type="synonym">Heteropora millepora</name>
    <dbReference type="NCBI Taxonomy" id="45264"/>
    <lineage>
        <taxon>Eukaryota</taxon>
        <taxon>Metazoa</taxon>
        <taxon>Cnidaria</taxon>
        <taxon>Anthozoa</taxon>
        <taxon>Hexacorallia</taxon>
        <taxon>Scleractinia</taxon>
        <taxon>Astrocoeniina</taxon>
        <taxon>Acroporidae</taxon>
        <taxon>Acropora</taxon>
    </lineage>
</organism>
<evidence type="ECO:0000255" key="1"/>
<evidence type="ECO:0000255" key="2">
    <source>
        <dbReference type="PROSITE-ProRule" id="PRU00076"/>
    </source>
</evidence>
<evidence type="ECO:0000255" key="3">
    <source>
        <dbReference type="PROSITE-ProRule" id="PRU00210"/>
    </source>
</evidence>
<evidence type="ECO:0000255" key="4">
    <source>
        <dbReference type="PROSITE-ProRule" id="PRU00347"/>
    </source>
</evidence>
<evidence type="ECO:0000255" key="5">
    <source>
        <dbReference type="PROSITE-ProRule" id="PRU00570"/>
    </source>
</evidence>
<evidence type="ECO:0000255" key="6">
    <source>
        <dbReference type="PROSITE-ProRule" id="PRU00580"/>
    </source>
</evidence>
<evidence type="ECO:0000269" key="7">
    <source>
    </source>
</evidence>
<evidence type="ECO:0000303" key="8">
    <source>
    </source>
</evidence>
<evidence type="ECO:0000305" key="9"/>
<reference evidence="9" key="1">
    <citation type="journal article" date="2012" name="Mol. Ecol.">
        <title>Whole transcriptome analysis of the coral Acropora millepora reveals complex responses to CO(2)-driven acidification during the initiation of calcification.</title>
        <authorList>
            <person name="Moya A."/>
            <person name="Huisman L."/>
            <person name="Ball E.E."/>
            <person name="Hayward D.C."/>
            <person name="Grasso L.C."/>
            <person name="Chua C.M."/>
            <person name="Woo H.N."/>
            <person name="Gattuso J.P."/>
            <person name="Foret S."/>
            <person name="Miller D.J."/>
        </authorList>
    </citation>
    <scope>NUCLEOTIDE SEQUENCE [MRNA]</scope>
</reference>
<reference evidence="9" key="2">
    <citation type="journal article" date="2013" name="Mol. Biol. Evol.">
        <title>The skeletal proteome of the coral Acropora millepora: the evolution of calcification by co-option and domain shuffling.</title>
        <authorList>
            <person name="Ramos-Silva P."/>
            <person name="Kaandorp J."/>
            <person name="Huisman L."/>
            <person name="Marie B."/>
            <person name="Zanella-Cleon I."/>
            <person name="Guichard N."/>
            <person name="Miller D.J."/>
            <person name="Marin F."/>
        </authorList>
    </citation>
    <scope>PROTEIN SEQUENCE OF 57-68; 116-126; 280-293; 312-351; 376-389; 506-529; 562-575; 606-618; 634-650 AND 697-706</scope>
    <scope>TISSUE SPECIFICITY</scope>
    <scope>IDENTIFICATION BY MASS SPECTROMETRY</scope>
</reference>
<feature type="chain" id="PRO_0000429549" description="Mucin-like protein">
    <location>
        <begin position="1" status="less than"/>
        <end position="1594"/>
    </location>
</feature>
<feature type="topological domain" description="Extracellular" evidence="1">
    <location>
        <begin position="1" status="less than"/>
        <end position="1530"/>
    </location>
</feature>
<feature type="transmembrane region" description="Helical" evidence="1">
    <location>
        <begin position="1531"/>
        <end position="1551"/>
    </location>
</feature>
<feature type="topological domain" description="Cytoplasmic" evidence="1">
    <location>
        <begin position="1552"/>
        <end position="1593"/>
    </location>
</feature>
<feature type="domain" description="TSP type-1 1" evidence="3">
    <location>
        <begin position="141"/>
        <end position="196"/>
    </location>
</feature>
<feature type="domain" description="TSP type-1 2" evidence="3">
    <location>
        <begin position="198"/>
        <end position="253"/>
    </location>
</feature>
<feature type="domain" description="TSP type-1 3" evidence="3">
    <location>
        <begin position="255"/>
        <end position="310"/>
    </location>
</feature>
<feature type="domain" description="NIDO" evidence="5">
    <location>
        <begin position="400"/>
        <end position="566"/>
    </location>
</feature>
<feature type="domain" description="AMOP" evidence="4">
    <location>
        <begin position="568"/>
        <end position="706"/>
    </location>
</feature>
<feature type="domain" description="VWFD" evidence="6">
    <location>
        <begin position="706"/>
        <end position="901"/>
    </location>
</feature>
<feature type="domain" description="EGF-like 1" evidence="2">
    <location>
        <begin position="1063"/>
        <end position="1108"/>
    </location>
</feature>
<feature type="domain" description="EGF-like 2" evidence="2">
    <location>
        <begin position="1110"/>
        <end position="1156"/>
    </location>
</feature>
<feature type="domain" description="EGF-like 3; calcium-binding" evidence="2">
    <location>
        <begin position="1157"/>
        <end position="1191"/>
    </location>
</feature>
<feature type="domain" description="EGF-like 4; calcium-binding" evidence="2">
    <location>
        <begin position="1281"/>
        <end position="1321"/>
    </location>
</feature>
<feature type="domain" description="EGF-like 5; calcium-binding" evidence="2">
    <location>
        <begin position="1322"/>
        <end position="1364"/>
    </location>
</feature>
<feature type="disulfide bond" evidence="1">
    <location>
        <begin position="153"/>
        <end position="190"/>
    </location>
</feature>
<feature type="disulfide bond" evidence="1">
    <location>
        <begin position="157"/>
        <end position="195"/>
    </location>
</feature>
<feature type="disulfide bond" evidence="1">
    <location>
        <begin position="168"/>
        <end position="180"/>
    </location>
</feature>
<feature type="disulfide bond" evidence="1">
    <location>
        <begin position="210"/>
        <end position="247"/>
    </location>
</feature>
<feature type="disulfide bond" evidence="1">
    <location>
        <begin position="214"/>
        <end position="252"/>
    </location>
</feature>
<feature type="disulfide bond" evidence="1">
    <location>
        <begin position="225"/>
        <end position="237"/>
    </location>
</feature>
<feature type="disulfide bond" evidence="1">
    <location>
        <begin position="267"/>
        <end position="304"/>
    </location>
</feature>
<feature type="disulfide bond" evidence="1">
    <location>
        <begin position="271"/>
        <end position="309"/>
    </location>
</feature>
<feature type="disulfide bond" evidence="1">
    <location>
        <begin position="282"/>
        <end position="294"/>
    </location>
</feature>
<feature type="disulfide bond" evidence="1">
    <location>
        <begin position="1067"/>
        <end position="1075"/>
    </location>
</feature>
<feature type="disulfide bond" evidence="1">
    <location>
        <begin position="1069"/>
        <end position="1096"/>
    </location>
</feature>
<feature type="disulfide bond" evidence="1">
    <location>
        <begin position="1098"/>
        <end position="1107"/>
    </location>
</feature>
<feature type="disulfide bond" evidence="1">
    <location>
        <begin position="1114"/>
        <end position="1127"/>
    </location>
</feature>
<feature type="disulfide bond" evidence="1">
    <location>
        <begin position="1121"/>
        <end position="1141"/>
    </location>
</feature>
<feature type="disulfide bond" evidence="1">
    <location>
        <begin position="1144"/>
        <end position="1155"/>
    </location>
</feature>
<feature type="disulfide bond" evidence="1">
    <location>
        <begin position="1161"/>
        <end position="1173"/>
    </location>
</feature>
<feature type="disulfide bond" evidence="1">
    <location>
        <begin position="1169"/>
        <end position="1182"/>
    </location>
</feature>
<feature type="disulfide bond" evidence="1">
    <location>
        <begin position="1285"/>
        <end position="1296"/>
    </location>
</feature>
<feature type="disulfide bond" evidence="1">
    <location>
        <begin position="1292"/>
        <end position="1305"/>
    </location>
</feature>
<feature type="disulfide bond" evidence="1">
    <location>
        <begin position="1307"/>
        <end position="1320"/>
    </location>
</feature>
<feature type="disulfide bond" evidence="1">
    <location>
        <begin position="1326"/>
        <end position="1341"/>
    </location>
</feature>
<feature type="disulfide bond" evidence="1">
    <location>
        <begin position="1334"/>
        <end position="1350"/>
    </location>
</feature>
<feature type="disulfide bond" evidence="1">
    <location>
        <begin position="1352"/>
        <end position="1363"/>
    </location>
</feature>
<feature type="non-terminal residue" evidence="9">
    <location>
        <position position="1"/>
    </location>
</feature>
<protein>
    <recommendedName>
        <fullName evidence="8">Mucin-like protein</fullName>
    </recommendedName>
</protein>
<accession>B3EWY9</accession>
<comment type="subcellular location">
    <subcellularLocation>
        <location evidence="1">Membrane</location>
        <topology evidence="1">Single-pass membrane protein</topology>
    </subcellularLocation>
    <text evidence="1 8">Presence in the organic matrix of the skeleton may be due to shedding of a soluble peptide.</text>
</comment>
<comment type="tissue specificity">
    <text evidence="7">Component of the acid-insoluble and acid-soluble organic matrix of the aragonitic skeleton (at protein level).</text>
</comment>
<name>MLP_ACRMI</name>